<proteinExistence type="inferred from homology"/>
<sequence length="75" mass="8986">MARYFRRRKFCRFTAEGVQEIDYKDIATLKNYITESGKIVPSRITGTRAKYQRQLARAIKRARYLSLLPYTDRHQ</sequence>
<feature type="chain" id="PRO_1000114421" description="Small ribosomal subunit protein bS18">
    <location>
        <begin position="1"/>
        <end position="75"/>
    </location>
</feature>
<name>RS18_ERWT9</name>
<reference key="1">
    <citation type="journal article" date="2008" name="Environ. Microbiol.">
        <title>The genome of Erwinia tasmaniensis strain Et1/99, a non-pathogenic bacterium in the genus Erwinia.</title>
        <authorList>
            <person name="Kube M."/>
            <person name="Migdoll A.M."/>
            <person name="Mueller I."/>
            <person name="Kuhl H."/>
            <person name="Beck A."/>
            <person name="Reinhardt R."/>
            <person name="Geider K."/>
        </authorList>
    </citation>
    <scope>NUCLEOTIDE SEQUENCE [LARGE SCALE GENOMIC DNA]</scope>
    <source>
        <strain>DSM 17950 / CFBP 7177 / CIP 109463 / NCPPB 4357 / Et1/99</strain>
    </source>
</reference>
<keyword id="KW-1185">Reference proteome</keyword>
<keyword id="KW-0687">Ribonucleoprotein</keyword>
<keyword id="KW-0689">Ribosomal protein</keyword>
<keyword id="KW-0694">RNA-binding</keyword>
<keyword id="KW-0699">rRNA-binding</keyword>
<dbReference type="EMBL" id="CU468135">
    <property type="protein sequence ID" value="CAO97999.1"/>
    <property type="molecule type" value="Genomic_DNA"/>
</dbReference>
<dbReference type="RefSeq" id="WP_000135199.1">
    <property type="nucleotide sequence ID" value="NC_010694.1"/>
</dbReference>
<dbReference type="SMR" id="B2VCV9"/>
<dbReference type="STRING" id="465817.ETA_29530"/>
<dbReference type="GeneID" id="98186237"/>
<dbReference type="KEGG" id="eta:ETA_29530"/>
<dbReference type="eggNOG" id="COG0238">
    <property type="taxonomic scope" value="Bacteria"/>
</dbReference>
<dbReference type="HOGENOM" id="CLU_148710_2_3_6"/>
<dbReference type="OrthoDB" id="9812008at2"/>
<dbReference type="Proteomes" id="UP000001726">
    <property type="component" value="Chromosome"/>
</dbReference>
<dbReference type="GO" id="GO:0022627">
    <property type="term" value="C:cytosolic small ribosomal subunit"/>
    <property type="evidence" value="ECO:0007669"/>
    <property type="project" value="TreeGrafter"/>
</dbReference>
<dbReference type="GO" id="GO:0070181">
    <property type="term" value="F:small ribosomal subunit rRNA binding"/>
    <property type="evidence" value="ECO:0007669"/>
    <property type="project" value="TreeGrafter"/>
</dbReference>
<dbReference type="GO" id="GO:0003735">
    <property type="term" value="F:structural constituent of ribosome"/>
    <property type="evidence" value="ECO:0007669"/>
    <property type="project" value="InterPro"/>
</dbReference>
<dbReference type="GO" id="GO:0006412">
    <property type="term" value="P:translation"/>
    <property type="evidence" value="ECO:0007669"/>
    <property type="project" value="UniProtKB-UniRule"/>
</dbReference>
<dbReference type="FunFam" id="4.10.640.10:FF:000001">
    <property type="entry name" value="30S ribosomal protein S18"/>
    <property type="match status" value="1"/>
</dbReference>
<dbReference type="Gene3D" id="4.10.640.10">
    <property type="entry name" value="Ribosomal protein S18"/>
    <property type="match status" value="1"/>
</dbReference>
<dbReference type="HAMAP" id="MF_00270">
    <property type="entry name" value="Ribosomal_bS18"/>
    <property type="match status" value="1"/>
</dbReference>
<dbReference type="InterPro" id="IPR001648">
    <property type="entry name" value="Ribosomal_bS18"/>
</dbReference>
<dbReference type="InterPro" id="IPR018275">
    <property type="entry name" value="Ribosomal_bS18_CS"/>
</dbReference>
<dbReference type="InterPro" id="IPR036870">
    <property type="entry name" value="Ribosomal_bS18_sf"/>
</dbReference>
<dbReference type="NCBIfam" id="TIGR00165">
    <property type="entry name" value="S18"/>
    <property type="match status" value="1"/>
</dbReference>
<dbReference type="PANTHER" id="PTHR13479">
    <property type="entry name" value="30S RIBOSOMAL PROTEIN S18"/>
    <property type="match status" value="1"/>
</dbReference>
<dbReference type="PANTHER" id="PTHR13479:SF40">
    <property type="entry name" value="SMALL RIBOSOMAL SUBUNIT PROTEIN BS18M"/>
    <property type="match status" value="1"/>
</dbReference>
<dbReference type="Pfam" id="PF01084">
    <property type="entry name" value="Ribosomal_S18"/>
    <property type="match status" value="1"/>
</dbReference>
<dbReference type="PRINTS" id="PR00974">
    <property type="entry name" value="RIBOSOMALS18"/>
</dbReference>
<dbReference type="SUPFAM" id="SSF46911">
    <property type="entry name" value="Ribosomal protein S18"/>
    <property type="match status" value="1"/>
</dbReference>
<dbReference type="PROSITE" id="PS00057">
    <property type="entry name" value="RIBOSOMAL_S18"/>
    <property type="match status" value="1"/>
</dbReference>
<gene>
    <name evidence="1" type="primary">rpsR</name>
    <name type="ordered locus">ETA_29530</name>
</gene>
<accession>B2VCV9</accession>
<organism>
    <name type="scientific">Erwinia tasmaniensis (strain DSM 17950 / CFBP 7177 / CIP 109463 / NCPPB 4357 / Et1/99)</name>
    <dbReference type="NCBI Taxonomy" id="465817"/>
    <lineage>
        <taxon>Bacteria</taxon>
        <taxon>Pseudomonadati</taxon>
        <taxon>Pseudomonadota</taxon>
        <taxon>Gammaproteobacteria</taxon>
        <taxon>Enterobacterales</taxon>
        <taxon>Erwiniaceae</taxon>
        <taxon>Erwinia</taxon>
    </lineage>
</organism>
<protein>
    <recommendedName>
        <fullName evidence="1">Small ribosomal subunit protein bS18</fullName>
    </recommendedName>
    <alternativeName>
        <fullName evidence="2">30S ribosomal protein S18</fullName>
    </alternativeName>
</protein>
<comment type="function">
    <text evidence="1">Binds as a heterodimer with protein bS6 to the central domain of the 16S rRNA, where it helps stabilize the platform of the 30S subunit.</text>
</comment>
<comment type="subunit">
    <text evidence="1">Part of the 30S ribosomal subunit. Forms a tight heterodimer with protein bS6.</text>
</comment>
<comment type="similarity">
    <text evidence="1">Belongs to the bacterial ribosomal protein bS18 family.</text>
</comment>
<evidence type="ECO:0000255" key="1">
    <source>
        <dbReference type="HAMAP-Rule" id="MF_00270"/>
    </source>
</evidence>
<evidence type="ECO:0000305" key="2"/>